<name>YJBM_ECOLI</name>
<dbReference type="EMBL" id="U00006">
    <property type="protein sequence ID" value="AAC43142.1"/>
    <property type="molecule type" value="Genomic_DNA"/>
</dbReference>
<dbReference type="EMBL" id="U00096">
    <property type="protein sequence ID" value="AAC77018.1"/>
    <property type="molecule type" value="Genomic_DNA"/>
</dbReference>
<dbReference type="EMBL" id="AP009048">
    <property type="protein sequence ID" value="BAE78050.1"/>
    <property type="molecule type" value="Genomic_DNA"/>
</dbReference>
<dbReference type="PIR" id="G65212">
    <property type="entry name" value="G65212"/>
</dbReference>
<dbReference type="RefSeq" id="NP_418472.1">
    <property type="nucleotide sequence ID" value="NC_000913.3"/>
</dbReference>
<dbReference type="RefSeq" id="WP_001311303.1">
    <property type="nucleotide sequence ID" value="NZ_SSUW01000018.1"/>
</dbReference>
<dbReference type="SMR" id="P32694"/>
<dbReference type="BioGRID" id="4259610">
    <property type="interactions" value="28"/>
</dbReference>
<dbReference type="BioGRID" id="852844">
    <property type="interactions" value="1"/>
</dbReference>
<dbReference type="FunCoup" id="P32694">
    <property type="interactions" value="6"/>
</dbReference>
<dbReference type="IntAct" id="P32694">
    <property type="interactions" value="5"/>
</dbReference>
<dbReference type="STRING" id="511145.b4048"/>
<dbReference type="PaxDb" id="511145-b4048"/>
<dbReference type="EnsemblBacteria" id="AAC77018">
    <property type="protein sequence ID" value="AAC77018"/>
    <property type="gene ID" value="b4048"/>
</dbReference>
<dbReference type="GeneID" id="948550"/>
<dbReference type="KEGG" id="ecj:JW4008"/>
<dbReference type="KEGG" id="eco:b4048"/>
<dbReference type="KEGG" id="ecoc:C3026_21875"/>
<dbReference type="PATRIC" id="fig|511145.12.peg.4165"/>
<dbReference type="EchoBASE" id="EB1875"/>
<dbReference type="eggNOG" id="ENOG5033T3G">
    <property type="taxonomic scope" value="Bacteria"/>
</dbReference>
<dbReference type="HOGENOM" id="CLU_081240_0_0_6"/>
<dbReference type="InParanoid" id="P32694"/>
<dbReference type="OMA" id="VNACQEY"/>
<dbReference type="BioCyc" id="EcoCyc:EG11931-MONOMER"/>
<dbReference type="PRO" id="PR:P32694"/>
<dbReference type="Proteomes" id="UP000000625">
    <property type="component" value="Chromosome"/>
</dbReference>
<dbReference type="InterPro" id="IPR020404">
    <property type="entry name" value="DUF2713"/>
</dbReference>
<dbReference type="Pfam" id="PF10897">
    <property type="entry name" value="DUF2713"/>
    <property type="match status" value="1"/>
</dbReference>
<sequence>MWVNKYIDDCTDEDLNDRDFIASVVDRAIFHFAINSICNPGDNKDAMPIEQCTFDVETKNDLPSTVQLFYEESKDNEPLANIHFQAIGSGFLTFVNACQEHDDNSLKLFASLLISLSYSSAYADLSETVYINENNESYLKAQFEKLSQRDMKKYLGEMKRLADGGEMNFDGYLDKMSHLVNEGTLDPDILSKMRDAAPQLISFAKSFDPTSKEEIKILTDTSKLIYDLFGVKSEK</sequence>
<accession>P32694</accession>
<accession>P76785</accession>
<accession>Q2M6Q6</accession>
<proteinExistence type="predicted"/>
<protein>
    <recommendedName>
        <fullName>Uncharacterized protein YjbM</fullName>
    </recommendedName>
</protein>
<organism>
    <name type="scientific">Escherichia coli (strain K12)</name>
    <dbReference type="NCBI Taxonomy" id="83333"/>
    <lineage>
        <taxon>Bacteria</taxon>
        <taxon>Pseudomonadati</taxon>
        <taxon>Pseudomonadota</taxon>
        <taxon>Gammaproteobacteria</taxon>
        <taxon>Enterobacterales</taxon>
        <taxon>Enterobacteriaceae</taxon>
        <taxon>Escherichia</taxon>
    </lineage>
</organism>
<reference key="1">
    <citation type="journal article" date="1993" name="Nucleic Acids Res.">
        <title>Analysis of the Escherichia coli genome. IV. DNA sequence of the region from 89.2 to 92.8 minutes.</title>
        <authorList>
            <person name="Blattner F.R."/>
            <person name="Burland V.D."/>
            <person name="Plunkett G. III"/>
            <person name="Sofia H.J."/>
            <person name="Daniels D.L."/>
        </authorList>
    </citation>
    <scope>NUCLEOTIDE SEQUENCE [LARGE SCALE GENOMIC DNA]</scope>
    <source>
        <strain>K12 / MG1655 / ATCC 47076</strain>
    </source>
</reference>
<reference key="2">
    <citation type="journal article" date="1997" name="Science">
        <title>The complete genome sequence of Escherichia coli K-12.</title>
        <authorList>
            <person name="Blattner F.R."/>
            <person name="Plunkett G. III"/>
            <person name="Bloch C.A."/>
            <person name="Perna N.T."/>
            <person name="Burland V."/>
            <person name="Riley M."/>
            <person name="Collado-Vides J."/>
            <person name="Glasner J.D."/>
            <person name="Rode C.K."/>
            <person name="Mayhew G.F."/>
            <person name="Gregor J."/>
            <person name="Davis N.W."/>
            <person name="Kirkpatrick H.A."/>
            <person name="Goeden M.A."/>
            <person name="Rose D.J."/>
            <person name="Mau B."/>
            <person name="Shao Y."/>
        </authorList>
    </citation>
    <scope>NUCLEOTIDE SEQUENCE [LARGE SCALE GENOMIC DNA]</scope>
    <source>
        <strain>K12 / MG1655 / ATCC 47076</strain>
    </source>
</reference>
<reference key="3">
    <citation type="journal article" date="2006" name="Mol. Syst. Biol.">
        <title>Highly accurate genome sequences of Escherichia coli K-12 strains MG1655 and W3110.</title>
        <authorList>
            <person name="Hayashi K."/>
            <person name="Morooka N."/>
            <person name="Yamamoto Y."/>
            <person name="Fujita K."/>
            <person name="Isono K."/>
            <person name="Choi S."/>
            <person name="Ohtsubo E."/>
            <person name="Baba T."/>
            <person name="Wanner B.L."/>
            <person name="Mori H."/>
            <person name="Horiuchi T."/>
        </authorList>
    </citation>
    <scope>NUCLEOTIDE SEQUENCE [LARGE SCALE GENOMIC DNA]</scope>
    <source>
        <strain>K12 / W3110 / ATCC 27325 / DSM 5911</strain>
    </source>
</reference>
<keyword id="KW-1185">Reference proteome</keyword>
<gene>
    <name type="primary">yjbM</name>
    <name type="ordered locus">b4048</name>
    <name type="ordered locus">JW4008</name>
</gene>
<feature type="chain" id="PRO_0000169713" description="Uncharacterized protein YjbM">
    <location>
        <begin position="1"/>
        <end position="235"/>
    </location>
</feature>